<accession>P42172</accession>
<feature type="chain" id="PRO_0000065129" description="Uncharacterized protein C03C10.5">
    <location>
        <begin position="1"/>
        <end position="68"/>
    </location>
</feature>
<keyword id="KW-1185">Reference proteome</keyword>
<proteinExistence type="predicted"/>
<organism>
    <name type="scientific">Caenorhabditis elegans</name>
    <dbReference type="NCBI Taxonomy" id="6239"/>
    <lineage>
        <taxon>Eukaryota</taxon>
        <taxon>Metazoa</taxon>
        <taxon>Ecdysozoa</taxon>
        <taxon>Nematoda</taxon>
        <taxon>Chromadorea</taxon>
        <taxon>Rhabditida</taxon>
        <taxon>Rhabditina</taxon>
        <taxon>Rhabditomorpha</taxon>
        <taxon>Rhabditoidea</taxon>
        <taxon>Rhabditidae</taxon>
        <taxon>Peloderinae</taxon>
        <taxon>Caenorhabditis</taxon>
    </lineage>
</organism>
<gene>
    <name type="ORF">C03C10.5</name>
</gene>
<name>YKL5_CAEEL</name>
<sequence length="68" mass="7857">MSGNQNGENVQQKKEKMCSIGETIYTWTQNKHATTYVGTYTKAFFSGEVCREIREHDEFLGMSFSSFF</sequence>
<protein>
    <recommendedName>
        <fullName>Uncharacterized protein C03C10.5</fullName>
    </recommendedName>
</protein>
<dbReference type="EMBL" id="Z35637">
    <property type="protein sequence ID" value="CAA84686.3"/>
    <property type="molecule type" value="Genomic_DNA"/>
</dbReference>
<dbReference type="PIR" id="T18874">
    <property type="entry name" value="T18874"/>
</dbReference>
<dbReference type="RefSeq" id="NP_497819.1">
    <property type="nucleotide sequence ID" value="NM_065418.1"/>
</dbReference>
<dbReference type="STRING" id="6239.C03C10.5.1"/>
<dbReference type="PaxDb" id="6239-C03C10.5"/>
<dbReference type="PeptideAtlas" id="P42172"/>
<dbReference type="EnsemblMetazoa" id="C03C10.5.1">
    <property type="protein sequence ID" value="C03C10.5.1"/>
    <property type="gene ID" value="WBGene00007271"/>
</dbReference>
<dbReference type="UCSC" id="C03C10.5">
    <property type="organism name" value="c. elegans"/>
</dbReference>
<dbReference type="AGR" id="WB:WBGene00007271"/>
<dbReference type="WormBase" id="C03C10.5">
    <property type="protein sequence ID" value="CE52045"/>
    <property type="gene ID" value="WBGene00007271"/>
</dbReference>
<dbReference type="HOGENOM" id="CLU_2796271_0_0_1"/>
<dbReference type="InParanoid" id="P42172"/>
<dbReference type="PRO" id="PR:P42172"/>
<dbReference type="Proteomes" id="UP000001940">
    <property type="component" value="Chromosome III"/>
</dbReference>
<dbReference type="Bgee" id="WBGene00007271">
    <property type="expression patterns" value="Expressed in pharyngeal muscle cell (C elegans) and 3 other cell types or tissues"/>
</dbReference>
<reference key="1">
    <citation type="journal article" date="1998" name="Science">
        <title>Genome sequence of the nematode C. elegans: a platform for investigating biology.</title>
        <authorList>
            <consortium name="The C. elegans sequencing consortium"/>
        </authorList>
    </citation>
    <scope>NUCLEOTIDE SEQUENCE [LARGE SCALE GENOMIC DNA]</scope>
    <source>
        <strain>Bristol N2</strain>
    </source>
</reference>